<dbReference type="EC" id="6.3.4.20" evidence="1"/>
<dbReference type="EMBL" id="CP001120">
    <property type="protein sequence ID" value="ACF66266.1"/>
    <property type="molecule type" value="Genomic_DNA"/>
</dbReference>
<dbReference type="RefSeq" id="WP_000817207.1">
    <property type="nucleotide sequence ID" value="NC_011083.1"/>
</dbReference>
<dbReference type="SMR" id="B4T9F0"/>
<dbReference type="KEGG" id="seh:SeHA_C0558"/>
<dbReference type="HOGENOM" id="CLU_081854_0_0_6"/>
<dbReference type="UniPathway" id="UPA00391"/>
<dbReference type="Proteomes" id="UP000001866">
    <property type="component" value="Chromosome"/>
</dbReference>
<dbReference type="GO" id="GO:0005524">
    <property type="term" value="F:ATP binding"/>
    <property type="evidence" value="ECO:0007669"/>
    <property type="project" value="UniProtKB-UniRule"/>
</dbReference>
<dbReference type="GO" id="GO:0016879">
    <property type="term" value="F:ligase activity, forming carbon-nitrogen bonds"/>
    <property type="evidence" value="ECO:0007669"/>
    <property type="project" value="UniProtKB-UniRule"/>
</dbReference>
<dbReference type="GO" id="GO:0008270">
    <property type="term" value="F:zinc ion binding"/>
    <property type="evidence" value="ECO:0007669"/>
    <property type="project" value="UniProtKB-UniRule"/>
</dbReference>
<dbReference type="GO" id="GO:0008616">
    <property type="term" value="P:queuosine biosynthetic process"/>
    <property type="evidence" value="ECO:0007669"/>
    <property type="project" value="UniProtKB-UniRule"/>
</dbReference>
<dbReference type="CDD" id="cd01995">
    <property type="entry name" value="QueC-like"/>
    <property type="match status" value="1"/>
</dbReference>
<dbReference type="FunFam" id="3.40.50.620:FF:000017">
    <property type="entry name" value="7-cyano-7-deazaguanine synthase"/>
    <property type="match status" value="1"/>
</dbReference>
<dbReference type="Gene3D" id="3.40.50.620">
    <property type="entry name" value="HUPs"/>
    <property type="match status" value="1"/>
</dbReference>
<dbReference type="HAMAP" id="MF_01633">
    <property type="entry name" value="QueC"/>
    <property type="match status" value="1"/>
</dbReference>
<dbReference type="InterPro" id="IPR018317">
    <property type="entry name" value="QueC"/>
</dbReference>
<dbReference type="InterPro" id="IPR014729">
    <property type="entry name" value="Rossmann-like_a/b/a_fold"/>
</dbReference>
<dbReference type="NCBIfam" id="TIGR00364">
    <property type="entry name" value="7-cyano-7-deazaguanine synthase QueC"/>
    <property type="match status" value="1"/>
</dbReference>
<dbReference type="NCBIfam" id="NF008317">
    <property type="entry name" value="PRK11106.1"/>
    <property type="match status" value="1"/>
</dbReference>
<dbReference type="PANTHER" id="PTHR42914">
    <property type="entry name" value="7-CYANO-7-DEAZAGUANINE SYNTHASE"/>
    <property type="match status" value="1"/>
</dbReference>
<dbReference type="PANTHER" id="PTHR42914:SF1">
    <property type="entry name" value="7-CYANO-7-DEAZAGUANINE SYNTHASE"/>
    <property type="match status" value="1"/>
</dbReference>
<dbReference type="Pfam" id="PF06508">
    <property type="entry name" value="QueC"/>
    <property type="match status" value="1"/>
</dbReference>
<dbReference type="PIRSF" id="PIRSF006293">
    <property type="entry name" value="ExsB"/>
    <property type="match status" value="1"/>
</dbReference>
<dbReference type="SUPFAM" id="SSF52402">
    <property type="entry name" value="Adenine nucleotide alpha hydrolases-like"/>
    <property type="match status" value="1"/>
</dbReference>
<accession>B4T9F0</accession>
<comment type="function">
    <text evidence="1">Catalyzes the ATP-dependent conversion of 7-carboxy-7-deazaguanine (CDG) to 7-cyano-7-deazaguanine (preQ(0)).</text>
</comment>
<comment type="catalytic activity">
    <reaction evidence="1">
        <text>7-carboxy-7-deazaguanine + NH4(+) + ATP = 7-cyano-7-deazaguanine + ADP + phosphate + H2O + H(+)</text>
        <dbReference type="Rhea" id="RHEA:27982"/>
        <dbReference type="ChEBI" id="CHEBI:15377"/>
        <dbReference type="ChEBI" id="CHEBI:15378"/>
        <dbReference type="ChEBI" id="CHEBI:28938"/>
        <dbReference type="ChEBI" id="CHEBI:30616"/>
        <dbReference type="ChEBI" id="CHEBI:43474"/>
        <dbReference type="ChEBI" id="CHEBI:45075"/>
        <dbReference type="ChEBI" id="CHEBI:61036"/>
        <dbReference type="ChEBI" id="CHEBI:456216"/>
        <dbReference type="EC" id="6.3.4.20"/>
    </reaction>
</comment>
<comment type="cofactor">
    <cofactor evidence="1">
        <name>Zn(2+)</name>
        <dbReference type="ChEBI" id="CHEBI:29105"/>
    </cofactor>
    <text evidence="1">Binds 1 zinc ion per subunit.</text>
</comment>
<comment type="pathway">
    <text evidence="1">Purine metabolism; 7-cyano-7-deazaguanine biosynthesis.</text>
</comment>
<comment type="similarity">
    <text evidence="1">Belongs to the QueC family.</text>
</comment>
<evidence type="ECO:0000255" key="1">
    <source>
        <dbReference type="HAMAP-Rule" id="MF_01633"/>
    </source>
</evidence>
<feature type="chain" id="PRO_1000186631" description="7-cyano-7-deazaguanine synthase">
    <location>
        <begin position="1"/>
        <end position="231"/>
    </location>
</feature>
<feature type="binding site" evidence="1">
    <location>
        <begin position="8"/>
        <end position="18"/>
    </location>
    <ligand>
        <name>ATP</name>
        <dbReference type="ChEBI" id="CHEBI:30616"/>
    </ligand>
</feature>
<feature type="binding site" evidence="1">
    <location>
        <position position="188"/>
    </location>
    <ligand>
        <name>Zn(2+)</name>
        <dbReference type="ChEBI" id="CHEBI:29105"/>
    </ligand>
</feature>
<feature type="binding site" evidence="1">
    <location>
        <position position="197"/>
    </location>
    <ligand>
        <name>Zn(2+)</name>
        <dbReference type="ChEBI" id="CHEBI:29105"/>
    </ligand>
</feature>
<feature type="binding site" evidence="1">
    <location>
        <position position="200"/>
    </location>
    <ligand>
        <name>Zn(2+)</name>
        <dbReference type="ChEBI" id="CHEBI:29105"/>
    </ligand>
</feature>
<feature type="binding site" evidence="1">
    <location>
        <position position="203"/>
    </location>
    <ligand>
        <name>Zn(2+)</name>
        <dbReference type="ChEBI" id="CHEBI:29105"/>
    </ligand>
</feature>
<reference key="1">
    <citation type="journal article" date="2011" name="J. Bacteriol.">
        <title>Comparative genomics of 28 Salmonella enterica isolates: evidence for CRISPR-mediated adaptive sublineage evolution.</title>
        <authorList>
            <person name="Fricke W.F."/>
            <person name="Mammel M.K."/>
            <person name="McDermott P.F."/>
            <person name="Tartera C."/>
            <person name="White D.G."/>
            <person name="Leclerc J.E."/>
            <person name="Ravel J."/>
            <person name="Cebula T.A."/>
        </authorList>
    </citation>
    <scope>NUCLEOTIDE SEQUENCE [LARGE SCALE GENOMIC DNA]</scope>
    <source>
        <strain>SL476</strain>
    </source>
</reference>
<protein>
    <recommendedName>
        <fullName evidence="1">7-cyano-7-deazaguanine synthase</fullName>
        <ecNumber evidence="1">6.3.4.20</ecNumber>
    </recommendedName>
    <alternativeName>
        <fullName evidence="1">7-cyano-7-carbaguanine synthase</fullName>
    </alternativeName>
    <alternativeName>
        <fullName evidence="1">PreQ(0) synthase</fullName>
    </alternativeName>
    <alternativeName>
        <fullName evidence="1">Queuosine biosynthesis protein QueC</fullName>
    </alternativeName>
</protein>
<sequence>MKRAVVVFSGGQDSTTCLAQARHQYDEVHCVTFDYGQRHRAEIDVARALALKLGTRAHKVLDVTLLNELAVSSLTRDSIPVPDYEPNADGIPNTFVPGRNILFLTLAAIYAYQVKAEAVITGVCETDFSGYPDCRDEFVKALNHAVNLGMAKDIRFETPLMWIDKAETWALADYWGQLDLVREETLTCYNGIKGDGCGHCAACNLRANGLNHYLSNKAAVMAAMKQKTGLR</sequence>
<proteinExistence type="inferred from homology"/>
<gene>
    <name evidence="1" type="primary">queC</name>
    <name type="ordered locus">SeHA_C0558</name>
</gene>
<keyword id="KW-0067">ATP-binding</keyword>
<keyword id="KW-0436">Ligase</keyword>
<keyword id="KW-0479">Metal-binding</keyword>
<keyword id="KW-0547">Nucleotide-binding</keyword>
<keyword id="KW-0671">Queuosine biosynthesis</keyword>
<keyword id="KW-0862">Zinc</keyword>
<organism>
    <name type="scientific">Salmonella heidelberg (strain SL476)</name>
    <dbReference type="NCBI Taxonomy" id="454169"/>
    <lineage>
        <taxon>Bacteria</taxon>
        <taxon>Pseudomonadati</taxon>
        <taxon>Pseudomonadota</taxon>
        <taxon>Gammaproteobacteria</taxon>
        <taxon>Enterobacterales</taxon>
        <taxon>Enterobacteriaceae</taxon>
        <taxon>Salmonella</taxon>
    </lineage>
</organism>
<name>QUEC_SALHS</name>